<feature type="chain" id="PRO_0000140743" description="3-dehydroquinate synthase">
    <location>
        <begin position="1"/>
        <end position="362"/>
    </location>
</feature>
<feature type="binding site" evidence="1">
    <location>
        <begin position="70"/>
        <end position="75"/>
    </location>
    <ligand>
        <name>NAD(+)</name>
        <dbReference type="ChEBI" id="CHEBI:57540"/>
    </ligand>
</feature>
<feature type="binding site" evidence="1">
    <location>
        <begin position="104"/>
        <end position="108"/>
    </location>
    <ligand>
        <name>NAD(+)</name>
        <dbReference type="ChEBI" id="CHEBI:57540"/>
    </ligand>
</feature>
<feature type="binding site" evidence="1">
    <location>
        <begin position="128"/>
        <end position="129"/>
    </location>
    <ligand>
        <name>NAD(+)</name>
        <dbReference type="ChEBI" id="CHEBI:57540"/>
    </ligand>
</feature>
<feature type="binding site" evidence="1">
    <location>
        <position position="141"/>
    </location>
    <ligand>
        <name>NAD(+)</name>
        <dbReference type="ChEBI" id="CHEBI:57540"/>
    </ligand>
</feature>
<feature type="binding site" evidence="1">
    <location>
        <position position="150"/>
    </location>
    <ligand>
        <name>NAD(+)</name>
        <dbReference type="ChEBI" id="CHEBI:57540"/>
    </ligand>
</feature>
<feature type="binding site" evidence="1">
    <location>
        <begin position="168"/>
        <end position="171"/>
    </location>
    <ligand>
        <name>NAD(+)</name>
        <dbReference type="ChEBI" id="CHEBI:57540"/>
    </ligand>
</feature>
<feature type="binding site" evidence="1">
    <location>
        <position position="183"/>
    </location>
    <ligand>
        <name>Zn(2+)</name>
        <dbReference type="ChEBI" id="CHEBI:29105"/>
    </ligand>
</feature>
<feature type="binding site" evidence="1">
    <location>
        <position position="246"/>
    </location>
    <ligand>
        <name>Zn(2+)</name>
        <dbReference type="ChEBI" id="CHEBI:29105"/>
    </ligand>
</feature>
<feature type="binding site" evidence="1">
    <location>
        <position position="263"/>
    </location>
    <ligand>
        <name>Zn(2+)</name>
        <dbReference type="ChEBI" id="CHEBI:29105"/>
    </ligand>
</feature>
<keyword id="KW-0028">Amino-acid biosynthesis</keyword>
<keyword id="KW-0057">Aromatic amino acid biosynthesis</keyword>
<keyword id="KW-0170">Cobalt</keyword>
<keyword id="KW-0963">Cytoplasm</keyword>
<keyword id="KW-0456">Lyase</keyword>
<keyword id="KW-0479">Metal-binding</keyword>
<keyword id="KW-0520">NAD</keyword>
<keyword id="KW-0547">Nucleotide-binding</keyword>
<keyword id="KW-1185">Reference proteome</keyword>
<keyword id="KW-0862">Zinc</keyword>
<organism>
    <name type="scientific">Haemophilus influenzae (strain ATCC 51907 / DSM 11121 / KW20 / Rd)</name>
    <dbReference type="NCBI Taxonomy" id="71421"/>
    <lineage>
        <taxon>Bacteria</taxon>
        <taxon>Pseudomonadati</taxon>
        <taxon>Pseudomonadota</taxon>
        <taxon>Gammaproteobacteria</taxon>
        <taxon>Pasteurellales</taxon>
        <taxon>Pasteurellaceae</taxon>
        <taxon>Haemophilus</taxon>
    </lineage>
</organism>
<protein>
    <recommendedName>
        <fullName evidence="1">3-dehydroquinate synthase</fullName>
        <shortName evidence="1">DHQS</shortName>
        <ecNumber evidence="1">4.2.3.4</ecNumber>
    </recommendedName>
</protein>
<comment type="function">
    <text evidence="1">Catalyzes the conversion of 3-deoxy-D-arabino-heptulosonate 7-phosphate (DAHP) to dehydroquinate (DHQ).</text>
</comment>
<comment type="catalytic activity">
    <reaction evidence="1">
        <text>7-phospho-2-dehydro-3-deoxy-D-arabino-heptonate = 3-dehydroquinate + phosphate</text>
        <dbReference type="Rhea" id="RHEA:21968"/>
        <dbReference type="ChEBI" id="CHEBI:32364"/>
        <dbReference type="ChEBI" id="CHEBI:43474"/>
        <dbReference type="ChEBI" id="CHEBI:58394"/>
        <dbReference type="EC" id="4.2.3.4"/>
    </reaction>
</comment>
<comment type="cofactor">
    <cofactor evidence="1">
        <name>NAD(+)</name>
        <dbReference type="ChEBI" id="CHEBI:57540"/>
    </cofactor>
</comment>
<comment type="cofactor">
    <cofactor evidence="1">
        <name>Co(2+)</name>
        <dbReference type="ChEBI" id="CHEBI:48828"/>
    </cofactor>
    <cofactor evidence="1">
        <name>Zn(2+)</name>
        <dbReference type="ChEBI" id="CHEBI:29105"/>
    </cofactor>
    <text evidence="1">Binds 1 divalent metal cation per subunit. Can use either Co(2+) or Zn(2+).</text>
</comment>
<comment type="pathway">
    <text evidence="1">Metabolic intermediate biosynthesis; chorismate biosynthesis; chorismate from D-erythrose 4-phosphate and phosphoenolpyruvate: step 2/7.</text>
</comment>
<comment type="subcellular location">
    <subcellularLocation>
        <location evidence="1">Cytoplasm</location>
    </subcellularLocation>
</comment>
<comment type="similarity">
    <text evidence="1 2">Belongs to the sugar phosphate cyclases superfamily. Dehydroquinate synthase family.</text>
</comment>
<dbReference type="EC" id="4.2.3.4" evidence="1"/>
<dbReference type="EMBL" id="L42023">
    <property type="protein sequence ID" value="AAC21876.1"/>
    <property type="molecule type" value="Genomic_DNA"/>
</dbReference>
<dbReference type="PIR" id="G64054">
    <property type="entry name" value="G64054"/>
</dbReference>
<dbReference type="RefSeq" id="NP_438377.1">
    <property type="nucleotide sequence ID" value="NC_000907.1"/>
</dbReference>
<dbReference type="SMR" id="P43879"/>
<dbReference type="STRING" id="71421.HI_0208"/>
<dbReference type="EnsemblBacteria" id="AAC21876">
    <property type="protein sequence ID" value="AAC21876"/>
    <property type="gene ID" value="HI_0208"/>
</dbReference>
<dbReference type="KEGG" id="hin:HI_0208"/>
<dbReference type="PATRIC" id="fig|71421.8.peg.213"/>
<dbReference type="eggNOG" id="COG0337">
    <property type="taxonomic scope" value="Bacteria"/>
</dbReference>
<dbReference type="HOGENOM" id="CLU_001201_0_2_6"/>
<dbReference type="OrthoDB" id="9806583at2"/>
<dbReference type="PhylomeDB" id="P43879"/>
<dbReference type="BioCyc" id="HINF71421:G1GJ1-219-MONOMER"/>
<dbReference type="UniPathway" id="UPA00053">
    <property type="reaction ID" value="UER00085"/>
</dbReference>
<dbReference type="Proteomes" id="UP000000579">
    <property type="component" value="Chromosome"/>
</dbReference>
<dbReference type="GO" id="GO:0005737">
    <property type="term" value="C:cytoplasm"/>
    <property type="evidence" value="ECO:0007669"/>
    <property type="project" value="UniProtKB-SubCell"/>
</dbReference>
<dbReference type="GO" id="GO:0003856">
    <property type="term" value="F:3-dehydroquinate synthase activity"/>
    <property type="evidence" value="ECO:0000318"/>
    <property type="project" value="GO_Central"/>
</dbReference>
<dbReference type="GO" id="GO:0046872">
    <property type="term" value="F:metal ion binding"/>
    <property type="evidence" value="ECO:0007669"/>
    <property type="project" value="UniProtKB-KW"/>
</dbReference>
<dbReference type="GO" id="GO:0000166">
    <property type="term" value="F:nucleotide binding"/>
    <property type="evidence" value="ECO:0007669"/>
    <property type="project" value="UniProtKB-KW"/>
</dbReference>
<dbReference type="GO" id="GO:0008652">
    <property type="term" value="P:amino acid biosynthetic process"/>
    <property type="evidence" value="ECO:0007669"/>
    <property type="project" value="UniProtKB-KW"/>
</dbReference>
<dbReference type="GO" id="GO:0009073">
    <property type="term" value="P:aromatic amino acid family biosynthetic process"/>
    <property type="evidence" value="ECO:0000318"/>
    <property type="project" value="GO_Central"/>
</dbReference>
<dbReference type="GO" id="GO:0009423">
    <property type="term" value="P:chorismate biosynthetic process"/>
    <property type="evidence" value="ECO:0007669"/>
    <property type="project" value="UniProtKB-UniRule"/>
</dbReference>
<dbReference type="CDD" id="cd08195">
    <property type="entry name" value="DHQS"/>
    <property type="match status" value="1"/>
</dbReference>
<dbReference type="FunFam" id="1.20.1090.10:FF:000002">
    <property type="entry name" value="3-dehydroquinate synthase"/>
    <property type="match status" value="1"/>
</dbReference>
<dbReference type="FunFam" id="3.40.50.1970:FF:000031">
    <property type="entry name" value="3-dehydroquinate synthase"/>
    <property type="match status" value="1"/>
</dbReference>
<dbReference type="Gene3D" id="3.40.50.1970">
    <property type="match status" value="1"/>
</dbReference>
<dbReference type="Gene3D" id="1.20.1090.10">
    <property type="entry name" value="Dehydroquinate synthase-like - alpha domain"/>
    <property type="match status" value="1"/>
</dbReference>
<dbReference type="HAMAP" id="MF_00110">
    <property type="entry name" value="DHQ_synthase"/>
    <property type="match status" value="1"/>
</dbReference>
<dbReference type="InterPro" id="IPR050071">
    <property type="entry name" value="Dehydroquinate_synthase"/>
</dbReference>
<dbReference type="InterPro" id="IPR016037">
    <property type="entry name" value="DHQ_synth_AroB"/>
</dbReference>
<dbReference type="InterPro" id="IPR030963">
    <property type="entry name" value="DHQ_synth_fam"/>
</dbReference>
<dbReference type="InterPro" id="IPR030960">
    <property type="entry name" value="DHQS/DOIS_N"/>
</dbReference>
<dbReference type="InterPro" id="IPR056179">
    <property type="entry name" value="DHQS_C"/>
</dbReference>
<dbReference type="NCBIfam" id="TIGR01357">
    <property type="entry name" value="aroB"/>
    <property type="match status" value="1"/>
</dbReference>
<dbReference type="PANTHER" id="PTHR43622">
    <property type="entry name" value="3-DEHYDROQUINATE SYNTHASE"/>
    <property type="match status" value="1"/>
</dbReference>
<dbReference type="PANTHER" id="PTHR43622:SF7">
    <property type="entry name" value="3-DEHYDROQUINATE SYNTHASE, CHLOROPLASTIC"/>
    <property type="match status" value="1"/>
</dbReference>
<dbReference type="Pfam" id="PF01761">
    <property type="entry name" value="DHQ_synthase"/>
    <property type="match status" value="1"/>
</dbReference>
<dbReference type="Pfam" id="PF24621">
    <property type="entry name" value="DHQS_C"/>
    <property type="match status" value="1"/>
</dbReference>
<dbReference type="PIRSF" id="PIRSF001455">
    <property type="entry name" value="DHQ_synth"/>
    <property type="match status" value="1"/>
</dbReference>
<dbReference type="SUPFAM" id="SSF56796">
    <property type="entry name" value="Dehydroquinate synthase-like"/>
    <property type="match status" value="1"/>
</dbReference>
<evidence type="ECO:0000255" key="1">
    <source>
        <dbReference type="HAMAP-Rule" id="MF_00110"/>
    </source>
</evidence>
<evidence type="ECO:0000305" key="2"/>
<name>AROB_HAEIN</name>
<reference key="1">
    <citation type="journal article" date="1995" name="Science">
        <title>Whole-genome random sequencing and assembly of Haemophilus influenzae Rd.</title>
        <authorList>
            <person name="Fleischmann R.D."/>
            <person name="Adams M.D."/>
            <person name="White O."/>
            <person name="Clayton R.A."/>
            <person name="Kirkness E.F."/>
            <person name="Kerlavage A.R."/>
            <person name="Bult C.J."/>
            <person name="Tomb J.-F."/>
            <person name="Dougherty B.A."/>
            <person name="Merrick J.M."/>
            <person name="McKenney K."/>
            <person name="Sutton G.G."/>
            <person name="FitzHugh W."/>
            <person name="Fields C.A."/>
            <person name="Gocayne J.D."/>
            <person name="Scott J.D."/>
            <person name="Shirley R."/>
            <person name="Liu L.-I."/>
            <person name="Glodek A."/>
            <person name="Kelley J.M."/>
            <person name="Weidman J.F."/>
            <person name="Phillips C.A."/>
            <person name="Spriggs T."/>
            <person name="Hedblom E."/>
            <person name="Cotton M.D."/>
            <person name="Utterback T.R."/>
            <person name="Hanna M.C."/>
            <person name="Nguyen D.T."/>
            <person name="Saudek D.M."/>
            <person name="Brandon R.C."/>
            <person name="Fine L.D."/>
            <person name="Fritchman J.L."/>
            <person name="Fuhrmann J.L."/>
            <person name="Geoghagen N.S.M."/>
            <person name="Gnehm C.L."/>
            <person name="McDonald L.A."/>
            <person name="Small K.V."/>
            <person name="Fraser C.M."/>
            <person name="Smith H.O."/>
            <person name="Venter J.C."/>
        </authorList>
    </citation>
    <scope>NUCLEOTIDE SEQUENCE [LARGE SCALE GENOMIC DNA]</scope>
    <source>
        <strain>ATCC 51907 / DSM 11121 / KW20 / Rd</strain>
    </source>
</reference>
<sequence>MLCVNVELQERRYPILIGSGLLQDERSYPIKRGDRVMIVTNPTVAQFYLDTVIYALEKRGCVVDHVLLPDGEKYKTLESLNLIFTALLQGNHGRDTTIIALGGGVIGDVAGFAAASYQRGVRLIQIPTTLLSQVDSSVGGKTAVNHELGKNMIGAFYQPSMVIIDTLTLNTLPKREVNAGLAEVIKYGAILDYEFFEWLEQHIDELVALHPEALQHCISRCCQIKADVVARDETEKGDRALLNLGHTFGHAIETHLGYGNWLHGEAVSTGMMMAAALSEELGDISIADVSRLEKLLARANLPTVSPDTMQPEDYLPHMMRDKKVLSGKLRLVLLKSLGQAYVANDTEHTLVLNAIRRCTQTD</sequence>
<proteinExistence type="inferred from homology"/>
<accession>P43879</accession>
<gene>
    <name evidence="1" type="primary">aroB</name>
    <name type="ordered locus">HI_0208</name>
</gene>